<organism>
    <name type="scientific">Bos taurus</name>
    <name type="common">Bovine</name>
    <dbReference type="NCBI Taxonomy" id="9913"/>
    <lineage>
        <taxon>Eukaryota</taxon>
        <taxon>Metazoa</taxon>
        <taxon>Chordata</taxon>
        <taxon>Craniata</taxon>
        <taxon>Vertebrata</taxon>
        <taxon>Euteleostomi</taxon>
        <taxon>Mammalia</taxon>
        <taxon>Eutheria</taxon>
        <taxon>Laurasiatheria</taxon>
        <taxon>Artiodactyla</taxon>
        <taxon>Ruminantia</taxon>
        <taxon>Pecora</taxon>
        <taxon>Bovidae</taxon>
        <taxon>Bovinae</taxon>
        <taxon>Bos</taxon>
    </lineage>
</organism>
<proteinExistence type="evidence at transcript level"/>
<sequence length="296" mass="31604">MLRVLTSTLRFPRPWKPLETRGCSSNPGAAGREIQVCALAGPNQGIAEILMNRPSARNALGNVFVSQLLEALAQLREDRQVRVLIFRSGVKGVFCAGADLKEREQMSEAEVGLFVQRLRGLMTEIAAFPAPTIAAMDGFALGGGLELALACDLRVAASSAVMGLIETTRGLLPGAGGTQRLPRCLGVALAKELIFTGRRLSGAQAQALGLVNHAVAQNEEGNAAYHRARALAQEILPQAPIAVRLSKVAIDRGIEVDIASGMAIEGICYAQNIPTRDRLEGMAAFREKRLPRFVGE</sequence>
<protein>
    <recommendedName>
        <fullName>Enoyl-CoA hydratase domain-containing protein 2, mitochondrial</fullName>
    </recommendedName>
</protein>
<feature type="transit peptide" description="Mitochondrion" evidence="3">
    <location>
        <begin position="1"/>
        <end status="unknown"/>
    </location>
</feature>
<feature type="chain" id="PRO_0000309458" description="Enoyl-CoA hydratase domain-containing protein 2, mitochondrial">
    <location>
        <begin status="unknown"/>
        <end position="296"/>
    </location>
</feature>
<feature type="site" description="Important for catalytic activity" evidence="1">
    <location>
        <position position="146"/>
    </location>
</feature>
<feature type="site" description="Important for catalytic activity" evidence="1">
    <location>
        <position position="166"/>
    </location>
</feature>
<feature type="modified residue" description="N6-acetyllysine; alternate" evidence="2">
    <location>
        <position position="101"/>
    </location>
</feature>
<feature type="modified residue" description="N6-succinyllysine; alternate" evidence="2">
    <location>
        <position position="101"/>
    </location>
</feature>
<accession>Q2TBT3</accession>
<evidence type="ECO:0000250" key="1"/>
<evidence type="ECO:0000250" key="2">
    <source>
        <dbReference type="UniProtKB" id="Q3TLP5"/>
    </source>
</evidence>
<evidence type="ECO:0000255" key="3"/>
<evidence type="ECO:0000305" key="4"/>
<reference key="1">
    <citation type="submission" date="2005-11" db="EMBL/GenBank/DDBJ databases">
        <authorList>
            <consortium name="NIH - Mammalian Gene Collection (MGC) project"/>
        </authorList>
    </citation>
    <scope>NUCLEOTIDE SEQUENCE [LARGE SCALE MRNA]</scope>
    <source>
        <strain>Crossbred X Angus</strain>
        <tissue>Liver</tissue>
    </source>
</reference>
<dbReference type="EMBL" id="BC109686">
    <property type="protein sequence ID" value="AAI09687.1"/>
    <property type="molecule type" value="mRNA"/>
</dbReference>
<dbReference type="RefSeq" id="NP_001033625.1">
    <property type="nucleotide sequence ID" value="NM_001038536.2"/>
</dbReference>
<dbReference type="SMR" id="Q2TBT3"/>
<dbReference type="FunCoup" id="Q2TBT3">
    <property type="interactions" value="742"/>
</dbReference>
<dbReference type="STRING" id="9913.ENSBTAP00000003779"/>
<dbReference type="PaxDb" id="9913-ENSBTAP00000003779"/>
<dbReference type="PeptideAtlas" id="Q2TBT3"/>
<dbReference type="GeneID" id="513795"/>
<dbReference type="KEGG" id="bta:513795"/>
<dbReference type="CTD" id="55268"/>
<dbReference type="eggNOG" id="KOG1679">
    <property type="taxonomic scope" value="Eukaryota"/>
</dbReference>
<dbReference type="HOGENOM" id="CLU_009834_7_6_1"/>
<dbReference type="InParanoid" id="Q2TBT3"/>
<dbReference type="OrthoDB" id="410701at2759"/>
<dbReference type="TreeFam" id="TF314276"/>
<dbReference type="Proteomes" id="UP000009136">
    <property type="component" value="Unplaced"/>
</dbReference>
<dbReference type="GO" id="GO:0005739">
    <property type="term" value="C:mitochondrion"/>
    <property type="evidence" value="ECO:0000318"/>
    <property type="project" value="GO_Central"/>
</dbReference>
<dbReference type="GO" id="GO:0016829">
    <property type="term" value="F:lyase activity"/>
    <property type="evidence" value="ECO:0007669"/>
    <property type="project" value="UniProtKB-KW"/>
</dbReference>
<dbReference type="GO" id="GO:0006635">
    <property type="term" value="P:fatty acid beta-oxidation"/>
    <property type="evidence" value="ECO:0000318"/>
    <property type="project" value="GO_Central"/>
</dbReference>
<dbReference type="CDD" id="cd06558">
    <property type="entry name" value="crotonase-like"/>
    <property type="match status" value="1"/>
</dbReference>
<dbReference type="FunFam" id="3.90.226.10:FF:000022">
    <property type="entry name" value="methylglutaconyl-CoA hydratase, mitochondrial isoform X1"/>
    <property type="match status" value="1"/>
</dbReference>
<dbReference type="FunFam" id="1.10.12.10:FF:000001">
    <property type="entry name" value="Probable enoyl-CoA hydratase, mitochondrial"/>
    <property type="match status" value="1"/>
</dbReference>
<dbReference type="Gene3D" id="3.90.226.10">
    <property type="entry name" value="2-enoyl-CoA Hydratase, Chain A, domain 1"/>
    <property type="match status" value="1"/>
</dbReference>
<dbReference type="Gene3D" id="1.10.12.10">
    <property type="entry name" value="Lyase 2-enoyl-coa Hydratase, Chain A, domain 2"/>
    <property type="match status" value="1"/>
</dbReference>
<dbReference type="InterPro" id="IPR029045">
    <property type="entry name" value="ClpP/crotonase-like_dom_sf"/>
</dbReference>
<dbReference type="InterPro" id="IPR018376">
    <property type="entry name" value="Enoyl-CoA_hyd/isom_CS"/>
</dbReference>
<dbReference type="InterPro" id="IPR001753">
    <property type="entry name" value="Enoyl-CoA_hydra/iso"/>
</dbReference>
<dbReference type="InterPro" id="IPR014748">
    <property type="entry name" value="Enoyl-CoA_hydra_C"/>
</dbReference>
<dbReference type="PANTHER" id="PTHR11941:SF44">
    <property type="entry name" value="ENOYL-COA HYDRATASE DOMAIN-CONTAINING PROTEIN 2, MITOCHONDRIAL"/>
    <property type="match status" value="1"/>
</dbReference>
<dbReference type="PANTHER" id="PTHR11941">
    <property type="entry name" value="ENOYL-COA HYDRATASE-RELATED"/>
    <property type="match status" value="1"/>
</dbReference>
<dbReference type="Pfam" id="PF00378">
    <property type="entry name" value="ECH_1"/>
    <property type="match status" value="1"/>
</dbReference>
<dbReference type="SUPFAM" id="SSF52096">
    <property type="entry name" value="ClpP/crotonase"/>
    <property type="match status" value="1"/>
</dbReference>
<dbReference type="PROSITE" id="PS00166">
    <property type="entry name" value="ENOYL_COA_HYDRATASE"/>
    <property type="match status" value="1"/>
</dbReference>
<comment type="subcellular location">
    <subcellularLocation>
        <location evidence="4">Mitochondrion</location>
    </subcellularLocation>
</comment>
<comment type="similarity">
    <text evidence="4">Belongs to the enoyl-CoA hydratase/isomerase family.</text>
</comment>
<name>ECHD2_BOVIN</name>
<keyword id="KW-0007">Acetylation</keyword>
<keyword id="KW-0276">Fatty acid metabolism</keyword>
<keyword id="KW-0443">Lipid metabolism</keyword>
<keyword id="KW-0456">Lyase</keyword>
<keyword id="KW-0496">Mitochondrion</keyword>
<keyword id="KW-1185">Reference proteome</keyword>
<keyword id="KW-0809">Transit peptide</keyword>
<gene>
    <name type="primary">ECHDC2</name>
</gene>